<organism>
    <name type="scientific">Syntrophomonas wolfei subsp. wolfei (strain DSM 2245B / Goettingen)</name>
    <dbReference type="NCBI Taxonomy" id="335541"/>
    <lineage>
        <taxon>Bacteria</taxon>
        <taxon>Bacillati</taxon>
        <taxon>Bacillota</taxon>
        <taxon>Clostridia</taxon>
        <taxon>Eubacteriales</taxon>
        <taxon>Syntrophomonadaceae</taxon>
        <taxon>Syntrophomonas</taxon>
    </lineage>
</organism>
<evidence type="ECO:0000255" key="1">
    <source>
        <dbReference type="HAMAP-Rule" id="MF_00052"/>
    </source>
</evidence>
<evidence type="ECO:0000255" key="2">
    <source>
        <dbReference type="PROSITE-ProRule" id="PRU01319"/>
    </source>
</evidence>
<feature type="chain" id="PRO_0000334967" description="Ribonuclease HII">
    <location>
        <begin position="1"/>
        <end position="255"/>
    </location>
</feature>
<feature type="domain" description="RNase H type-2" evidence="2">
    <location>
        <begin position="58"/>
        <end position="247"/>
    </location>
</feature>
<feature type="binding site" evidence="1">
    <location>
        <position position="64"/>
    </location>
    <ligand>
        <name>a divalent metal cation</name>
        <dbReference type="ChEBI" id="CHEBI:60240"/>
    </ligand>
</feature>
<feature type="binding site" evidence="1">
    <location>
        <position position="65"/>
    </location>
    <ligand>
        <name>a divalent metal cation</name>
        <dbReference type="ChEBI" id="CHEBI:60240"/>
    </ligand>
</feature>
<feature type="binding site" evidence="1">
    <location>
        <position position="156"/>
    </location>
    <ligand>
        <name>a divalent metal cation</name>
        <dbReference type="ChEBI" id="CHEBI:60240"/>
    </ligand>
</feature>
<dbReference type="EC" id="3.1.26.4" evidence="1"/>
<dbReference type="EMBL" id="CP000448">
    <property type="protein sequence ID" value="ABI68783.1"/>
    <property type="molecule type" value="Genomic_DNA"/>
</dbReference>
<dbReference type="RefSeq" id="WP_011640882.1">
    <property type="nucleotide sequence ID" value="NC_008346.1"/>
</dbReference>
<dbReference type="SMR" id="Q0AWX1"/>
<dbReference type="STRING" id="335541.Swol_1478"/>
<dbReference type="KEGG" id="swo:Swol_1478"/>
<dbReference type="eggNOG" id="COG0164">
    <property type="taxonomic scope" value="Bacteria"/>
</dbReference>
<dbReference type="HOGENOM" id="CLU_036532_3_2_9"/>
<dbReference type="OrthoDB" id="9803420at2"/>
<dbReference type="Proteomes" id="UP000001968">
    <property type="component" value="Chromosome"/>
</dbReference>
<dbReference type="GO" id="GO:0005737">
    <property type="term" value="C:cytoplasm"/>
    <property type="evidence" value="ECO:0007669"/>
    <property type="project" value="UniProtKB-SubCell"/>
</dbReference>
<dbReference type="GO" id="GO:0032299">
    <property type="term" value="C:ribonuclease H2 complex"/>
    <property type="evidence" value="ECO:0007669"/>
    <property type="project" value="TreeGrafter"/>
</dbReference>
<dbReference type="GO" id="GO:0030145">
    <property type="term" value="F:manganese ion binding"/>
    <property type="evidence" value="ECO:0007669"/>
    <property type="project" value="UniProtKB-UniRule"/>
</dbReference>
<dbReference type="GO" id="GO:0003723">
    <property type="term" value="F:RNA binding"/>
    <property type="evidence" value="ECO:0007669"/>
    <property type="project" value="InterPro"/>
</dbReference>
<dbReference type="GO" id="GO:0004523">
    <property type="term" value="F:RNA-DNA hybrid ribonuclease activity"/>
    <property type="evidence" value="ECO:0007669"/>
    <property type="project" value="UniProtKB-UniRule"/>
</dbReference>
<dbReference type="GO" id="GO:0043137">
    <property type="term" value="P:DNA replication, removal of RNA primer"/>
    <property type="evidence" value="ECO:0007669"/>
    <property type="project" value="TreeGrafter"/>
</dbReference>
<dbReference type="GO" id="GO:0006298">
    <property type="term" value="P:mismatch repair"/>
    <property type="evidence" value="ECO:0007669"/>
    <property type="project" value="TreeGrafter"/>
</dbReference>
<dbReference type="CDD" id="cd07182">
    <property type="entry name" value="RNase_HII_bacteria_HII_like"/>
    <property type="match status" value="1"/>
</dbReference>
<dbReference type="FunFam" id="3.30.420.10:FF:000006">
    <property type="entry name" value="Ribonuclease HII"/>
    <property type="match status" value="1"/>
</dbReference>
<dbReference type="Gene3D" id="3.30.420.10">
    <property type="entry name" value="Ribonuclease H-like superfamily/Ribonuclease H"/>
    <property type="match status" value="1"/>
</dbReference>
<dbReference type="HAMAP" id="MF_00052_B">
    <property type="entry name" value="RNase_HII_B"/>
    <property type="match status" value="1"/>
</dbReference>
<dbReference type="InterPro" id="IPR022898">
    <property type="entry name" value="RNase_HII"/>
</dbReference>
<dbReference type="InterPro" id="IPR001352">
    <property type="entry name" value="RNase_HII/HIII"/>
</dbReference>
<dbReference type="InterPro" id="IPR024567">
    <property type="entry name" value="RNase_HII/HIII_dom"/>
</dbReference>
<dbReference type="InterPro" id="IPR012337">
    <property type="entry name" value="RNaseH-like_sf"/>
</dbReference>
<dbReference type="InterPro" id="IPR036397">
    <property type="entry name" value="RNaseH_sf"/>
</dbReference>
<dbReference type="NCBIfam" id="NF000594">
    <property type="entry name" value="PRK00015.1-1"/>
    <property type="match status" value="1"/>
</dbReference>
<dbReference type="NCBIfam" id="NF000595">
    <property type="entry name" value="PRK00015.1-3"/>
    <property type="match status" value="1"/>
</dbReference>
<dbReference type="PANTHER" id="PTHR10954">
    <property type="entry name" value="RIBONUCLEASE H2 SUBUNIT A"/>
    <property type="match status" value="1"/>
</dbReference>
<dbReference type="PANTHER" id="PTHR10954:SF18">
    <property type="entry name" value="RIBONUCLEASE HII"/>
    <property type="match status" value="1"/>
</dbReference>
<dbReference type="Pfam" id="PF01351">
    <property type="entry name" value="RNase_HII"/>
    <property type="match status" value="1"/>
</dbReference>
<dbReference type="SUPFAM" id="SSF53098">
    <property type="entry name" value="Ribonuclease H-like"/>
    <property type="match status" value="1"/>
</dbReference>
<dbReference type="PROSITE" id="PS51975">
    <property type="entry name" value="RNASE_H_2"/>
    <property type="match status" value="1"/>
</dbReference>
<proteinExistence type="inferred from homology"/>
<accession>Q0AWX1</accession>
<comment type="function">
    <text evidence="1">Endonuclease that specifically degrades the RNA of RNA-DNA hybrids.</text>
</comment>
<comment type="catalytic activity">
    <reaction evidence="1">
        <text>Endonucleolytic cleavage to 5'-phosphomonoester.</text>
        <dbReference type="EC" id="3.1.26.4"/>
    </reaction>
</comment>
<comment type="cofactor">
    <cofactor evidence="1">
        <name>Mn(2+)</name>
        <dbReference type="ChEBI" id="CHEBI:29035"/>
    </cofactor>
    <cofactor evidence="1">
        <name>Mg(2+)</name>
        <dbReference type="ChEBI" id="CHEBI:18420"/>
    </cofactor>
    <text evidence="1">Manganese or magnesium. Binds 1 divalent metal ion per monomer in the absence of substrate. May bind a second metal ion after substrate binding.</text>
</comment>
<comment type="subcellular location">
    <subcellularLocation>
        <location evidence="1">Cytoplasm</location>
    </subcellularLocation>
</comment>
<comment type="similarity">
    <text evidence="1">Belongs to the RNase HII family.</text>
</comment>
<gene>
    <name evidence="1" type="primary">rnhB</name>
    <name type="ordered locus">Swol_1478</name>
</gene>
<reference key="1">
    <citation type="journal article" date="2010" name="Environ. Microbiol.">
        <title>The genome of Syntrophomonas wolfei: new insights into syntrophic metabolism and biohydrogen production.</title>
        <authorList>
            <person name="Sieber J.R."/>
            <person name="Sims D.R."/>
            <person name="Han C."/>
            <person name="Kim E."/>
            <person name="Lykidis A."/>
            <person name="Lapidus A.L."/>
            <person name="McDonnald E."/>
            <person name="Rohlin L."/>
            <person name="Culley D.E."/>
            <person name="Gunsalus R."/>
            <person name="McInerney M.J."/>
        </authorList>
    </citation>
    <scope>NUCLEOTIDE SEQUENCE [LARGE SCALE GENOMIC DNA]</scope>
    <source>
        <strain>DSM 2245B / Goettingen</strain>
    </source>
</reference>
<sequence length="255" mass="28634">MRSEQPLYNKRLFSDIIDKSTHFKEGLGLDKQKYLLDEVKRIEDLKRYEYEAYNNGFRYIAGIDEAGRGPIAGPVMAAAVILSRDFFCPGINDSKKLTALKRSKLAAEIKKQAISWSVAAVFPSYLDKVNILNATREAMLLAVKNLSPRPEFLLIDAVQLPDIDIKQYPLIKGDSLSVSIAAASILAKVERDRVMEAFDSLYPGYGFSRHKGYATREHLQSLLRLGTCALHRVSFEPVKSMVLGARYGEQPALFE</sequence>
<keyword id="KW-0963">Cytoplasm</keyword>
<keyword id="KW-0255">Endonuclease</keyword>
<keyword id="KW-0378">Hydrolase</keyword>
<keyword id="KW-0464">Manganese</keyword>
<keyword id="KW-0479">Metal-binding</keyword>
<keyword id="KW-0540">Nuclease</keyword>
<keyword id="KW-1185">Reference proteome</keyword>
<protein>
    <recommendedName>
        <fullName evidence="1">Ribonuclease HII</fullName>
        <shortName evidence="1">RNase HII</shortName>
        <ecNumber evidence="1">3.1.26.4</ecNumber>
    </recommendedName>
</protein>
<name>RNH2_SYNWW</name>